<reference evidence="3 5" key="1">
    <citation type="journal article" date="2003" name="Eur. J. Biochem.">
        <title>Sulfation of hydroxychlorobiphenyls. Molecular cloning, expression, and functional characterization of zebrafish SULT1 sulfotransferases.</title>
        <authorList>
            <person name="Sugahara T."/>
            <person name="Liu C.-C."/>
            <person name="Pai T.G."/>
            <person name="Collodi P."/>
            <person name="Suiko M."/>
            <person name="Sakakibara Y."/>
            <person name="Nishiyama K."/>
            <person name="Liu M.-C."/>
        </authorList>
    </citation>
    <scope>NUCLEOTIDE SEQUENCE [MRNA]</scope>
    <scope>FUNCTION</scope>
    <scope>TISSUE SPECIFICITY</scope>
    <scope>ACTIVITY REGULATION</scope>
</reference>
<reference evidence="4" key="2">
    <citation type="submission" date="2003-03" db="EMBL/GenBank/DDBJ databases">
        <authorList>
            <consortium name="NIH - Zebrafish Gene Collection (ZGC) project"/>
        </authorList>
    </citation>
    <scope>NUCLEOTIDE SEQUENCE [LARGE SCALE MRNA]</scope>
</reference>
<comment type="function">
    <text evidence="2">Sulfotransferase that utilizes 3'-phospho-5'-adenylyl sulfate (PAPS) as sulfonate donor to catalyze the sulfate conjugation of a variety of xenobiotic and endogenous compounds, including 2-naphthol, hydroxychlorobiphenyls, T3 (triiodo-L-thyronine), T4 (thyroxine), estrone and DOPA.</text>
</comment>
<comment type="activity regulation">
    <text evidence="2">Inhibited by Co(2+), Zn(2+), Cd(2+) and Pb(2+) ions. Inactivated by Hg(2+) and Cu(2+) ions.</text>
</comment>
<comment type="biophysicochemical properties">
    <phDependence>
        <text>Optimum pH is 4.75 and 10.5. These two pH optima may correspond to two distinct conformational states of the enzyme.</text>
    </phDependence>
    <temperatureDependence>
        <text>Active from 20 to 43 degrees Celsius.</text>
    </temperatureDependence>
</comment>
<comment type="subcellular location">
    <subcellularLocation>
        <location>Cytoplasm</location>
    </subcellularLocation>
</comment>
<comment type="tissue specificity">
    <text evidence="2">Expressed in liver.</text>
</comment>
<comment type="similarity">
    <text evidence="3">Belongs to the sulfotransferase 1 family.</text>
</comment>
<name>ST2S2_DANRE</name>
<proteinExistence type="evidence at protein level"/>
<evidence type="ECO:0000250" key="1"/>
<evidence type="ECO:0000269" key="2">
    <source>
    </source>
</evidence>
<evidence type="ECO:0000305" key="3"/>
<evidence type="ECO:0000312" key="4">
    <source>
        <dbReference type="EMBL" id="AAH47850.1"/>
    </source>
</evidence>
<evidence type="ECO:0000312" key="5">
    <source>
        <dbReference type="EMBL" id="AAO64984.1"/>
    </source>
</evidence>
<accession>Q7ZUS4</accession>
<accession>Q7T1C7</accession>
<organism>
    <name type="scientific">Danio rerio</name>
    <name type="common">Zebrafish</name>
    <name type="synonym">Brachydanio rerio</name>
    <dbReference type="NCBI Taxonomy" id="7955"/>
    <lineage>
        <taxon>Eukaryota</taxon>
        <taxon>Metazoa</taxon>
        <taxon>Chordata</taxon>
        <taxon>Craniata</taxon>
        <taxon>Vertebrata</taxon>
        <taxon>Euteleostomi</taxon>
        <taxon>Actinopterygii</taxon>
        <taxon>Neopterygii</taxon>
        <taxon>Teleostei</taxon>
        <taxon>Ostariophysi</taxon>
        <taxon>Cypriniformes</taxon>
        <taxon>Danionidae</taxon>
        <taxon>Danioninae</taxon>
        <taxon>Danio</taxon>
    </lineage>
</organism>
<sequence length="301" mass="35364">MEIPDFSSMKLDSRPELIDFEGVSMTRYFTDNWEKVKNFQARPDDILIATYPKAGTTWVSYILDLLYFGNESPERQTSQPIYMRVPFLEMCFQGLPLGTELADTLPTSPRPIKTHLPVQLVPKSFWEQNSKVVYVARNAKDNAVSYFHFDRMNMGQPEPGDWNTFLQKFMDGRNVFGPWYDHVNGYWKKKQTYSNILYMFYEDMVEDTGREVARLCSFLGLSTSATERERITKGVQFDVMKQNKMTNYSTLPVMDFKISPFMRKGKVGDWRNHFTVAQNEQFDEVYKQKMKNTTVKFRTEI</sequence>
<keyword id="KW-0128">Catecholamine metabolism</keyword>
<keyword id="KW-0963">Cytoplasm</keyword>
<keyword id="KW-0443">Lipid metabolism</keyword>
<keyword id="KW-1185">Reference proteome</keyword>
<keyword id="KW-0753">Steroid metabolism</keyword>
<keyword id="KW-0808">Transferase</keyword>
<gene>
    <name evidence="4" type="primary">sult1st2</name>
</gene>
<dbReference type="EC" id="2.8.2.-"/>
<dbReference type="EMBL" id="AY181065">
    <property type="protein sequence ID" value="AAO64984.1"/>
    <property type="molecule type" value="mRNA"/>
</dbReference>
<dbReference type="EMBL" id="BC047850">
    <property type="protein sequence ID" value="AAH47850.1"/>
    <property type="molecule type" value="mRNA"/>
</dbReference>
<dbReference type="RefSeq" id="NP_899190.2">
    <property type="nucleotide sequence ID" value="NM_183347.2"/>
</dbReference>
<dbReference type="SMR" id="Q7ZUS4"/>
<dbReference type="FunCoup" id="Q7ZUS4">
    <property type="interactions" value="28"/>
</dbReference>
<dbReference type="STRING" id="7955.ENSDARP00000030476"/>
<dbReference type="PaxDb" id="7955-ENSDARP00000030476"/>
<dbReference type="GeneID" id="791732"/>
<dbReference type="KEGG" id="dre:791732"/>
<dbReference type="AGR" id="ZFIN:ZDB-GENE-030804-27"/>
<dbReference type="CTD" id="791732"/>
<dbReference type="ZFIN" id="ZDB-GENE-030804-27">
    <property type="gene designation" value="sult1st2"/>
</dbReference>
<dbReference type="eggNOG" id="KOG1584">
    <property type="taxonomic scope" value="Eukaryota"/>
</dbReference>
<dbReference type="InParanoid" id="Q7ZUS4"/>
<dbReference type="OrthoDB" id="205623at2759"/>
<dbReference type="PhylomeDB" id="Q7ZUS4"/>
<dbReference type="BRENDA" id="2.8.2.15">
    <property type="organism ID" value="928"/>
</dbReference>
<dbReference type="Reactome" id="R-DRE-156584">
    <property type="pathway name" value="Cytosolic sulfonation of small molecules"/>
</dbReference>
<dbReference type="Reactome" id="R-DRE-9753281">
    <property type="pathway name" value="Paracetamol ADME"/>
</dbReference>
<dbReference type="PRO" id="PR:Q7ZUS4"/>
<dbReference type="Proteomes" id="UP000000437">
    <property type="component" value="Chromosome 8"/>
</dbReference>
<dbReference type="GO" id="GO:0005737">
    <property type="term" value="C:cytoplasm"/>
    <property type="evidence" value="ECO:0000318"/>
    <property type="project" value="GO_Central"/>
</dbReference>
<dbReference type="GO" id="GO:0004062">
    <property type="term" value="F:aryl sulfotransferase activity"/>
    <property type="evidence" value="ECO:0000318"/>
    <property type="project" value="GO_Central"/>
</dbReference>
<dbReference type="GO" id="GO:0004304">
    <property type="term" value="F:estrone sulfotransferase activity"/>
    <property type="evidence" value="ECO:0000314"/>
    <property type="project" value="ZFIN"/>
</dbReference>
<dbReference type="GO" id="GO:0008146">
    <property type="term" value="F:sulfotransferase activity"/>
    <property type="evidence" value="ECO:0000314"/>
    <property type="project" value="UniProtKB"/>
</dbReference>
<dbReference type="GO" id="GO:0006584">
    <property type="term" value="P:catecholamine metabolic process"/>
    <property type="evidence" value="ECO:0007669"/>
    <property type="project" value="UniProtKB-KW"/>
</dbReference>
<dbReference type="GO" id="GO:0008210">
    <property type="term" value="P:estrogen metabolic process"/>
    <property type="evidence" value="ECO:0000314"/>
    <property type="project" value="ZFIN"/>
</dbReference>
<dbReference type="GO" id="GO:0051923">
    <property type="term" value="P:sulfation"/>
    <property type="evidence" value="ECO:0000318"/>
    <property type="project" value="GO_Central"/>
</dbReference>
<dbReference type="GO" id="GO:0006805">
    <property type="term" value="P:xenobiotic metabolic process"/>
    <property type="evidence" value="ECO:0000314"/>
    <property type="project" value="UniProtKB"/>
</dbReference>
<dbReference type="FunFam" id="3.40.50.300:FF:000433">
    <property type="entry name" value="Estrogen sulfotransferase"/>
    <property type="match status" value="1"/>
</dbReference>
<dbReference type="Gene3D" id="3.40.50.300">
    <property type="entry name" value="P-loop containing nucleotide triphosphate hydrolases"/>
    <property type="match status" value="1"/>
</dbReference>
<dbReference type="InterPro" id="IPR027417">
    <property type="entry name" value="P-loop_NTPase"/>
</dbReference>
<dbReference type="InterPro" id="IPR000863">
    <property type="entry name" value="Sulfotransferase_dom"/>
</dbReference>
<dbReference type="PANTHER" id="PTHR11783">
    <property type="entry name" value="SULFOTRANSFERASE SULT"/>
    <property type="match status" value="1"/>
</dbReference>
<dbReference type="Pfam" id="PF00685">
    <property type="entry name" value="Sulfotransfer_1"/>
    <property type="match status" value="1"/>
</dbReference>
<dbReference type="SUPFAM" id="SSF52540">
    <property type="entry name" value="P-loop containing nucleoside triphosphate hydrolases"/>
    <property type="match status" value="1"/>
</dbReference>
<feature type="chain" id="PRO_0000085174" description="Cytosolic sulfotransferase 2">
    <location>
        <begin position="1"/>
        <end position="301"/>
    </location>
</feature>
<feature type="active site" description="Proton acceptor" evidence="1">
    <location>
        <position position="115"/>
    </location>
</feature>
<feature type="binding site" evidence="1">
    <location>
        <begin position="53"/>
        <end position="58"/>
    </location>
    <ligand>
        <name>3'-phosphoadenylyl sulfate</name>
        <dbReference type="ChEBI" id="CHEBI:58339"/>
    </ligand>
</feature>
<feature type="binding site" evidence="1">
    <location>
        <position position="137"/>
    </location>
    <ligand>
        <name>3'-phosphoadenylyl sulfate</name>
        <dbReference type="ChEBI" id="CHEBI:58339"/>
    </ligand>
</feature>
<feature type="binding site" evidence="1">
    <location>
        <position position="145"/>
    </location>
    <ligand>
        <name>3'-phosphoadenylyl sulfate</name>
        <dbReference type="ChEBI" id="CHEBI:58339"/>
    </ligand>
</feature>
<feature type="binding site" evidence="1">
    <location>
        <position position="201"/>
    </location>
    <ligand>
        <name>3'-phosphoadenylyl sulfate</name>
        <dbReference type="ChEBI" id="CHEBI:58339"/>
    </ligand>
</feature>
<feature type="binding site" evidence="1">
    <location>
        <begin position="235"/>
        <end position="240"/>
    </location>
    <ligand>
        <name>3'-phosphoadenylyl sulfate</name>
        <dbReference type="ChEBI" id="CHEBI:58339"/>
    </ligand>
</feature>
<feature type="binding site" evidence="1">
    <location>
        <begin position="263"/>
        <end position="265"/>
    </location>
    <ligand>
        <name>3'-phosphoadenylyl sulfate</name>
        <dbReference type="ChEBI" id="CHEBI:58339"/>
    </ligand>
</feature>
<feature type="sequence conflict" description="In Ref. 1; AAO64984." evidence="3" ref="1">
    <original>P</original>
    <variation>L</variation>
    <location>
        <position position="111"/>
    </location>
</feature>
<feature type="sequence conflict" description="In Ref. 1; AAO64984." evidence="3" ref="1">
    <original>T</original>
    <variation>A</variation>
    <location>
        <position position="226"/>
    </location>
</feature>
<feature type="sequence conflict" description="In Ref. 1; AAO64984." evidence="3" ref="1">
    <original>V</original>
    <variation>A</variation>
    <location>
        <position position="239"/>
    </location>
</feature>
<feature type="sequence conflict" description="In Ref. 1; AAO64984." evidence="3" ref="1">
    <original>V</original>
    <variation>D</variation>
    <location>
        <position position="285"/>
    </location>
</feature>
<protein>
    <recommendedName>
        <fullName>Cytosolic sulfotransferase 2</fullName>
        <ecNumber>2.8.2.-</ecNumber>
    </recommendedName>
    <alternativeName>
        <fullName>SULT1 ST2</fullName>
    </alternativeName>
</protein>